<evidence type="ECO:0000255" key="1">
    <source>
        <dbReference type="HAMAP-Rule" id="MF_00150"/>
    </source>
</evidence>
<feature type="chain" id="PRO_1000011046" description="N-acetyl-gamma-glutamyl-phosphate reductase">
    <location>
        <begin position="1"/>
        <end position="355"/>
    </location>
</feature>
<feature type="active site" evidence="1">
    <location>
        <position position="152"/>
    </location>
</feature>
<proteinExistence type="inferred from homology"/>
<keyword id="KW-0028">Amino-acid biosynthesis</keyword>
<keyword id="KW-0055">Arginine biosynthesis</keyword>
<keyword id="KW-0963">Cytoplasm</keyword>
<keyword id="KW-0521">NADP</keyword>
<keyword id="KW-0560">Oxidoreductase</keyword>
<keyword id="KW-1185">Reference proteome</keyword>
<reference key="1">
    <citation type="journal article" date="2010" name="Appl. Environ. Microbiol.">
        <title>The genome sequence of Psychrobacter arcticus 273-4, a psychroactive Siberian permafrost bacterium, reveals mechanisms for adaptation to low-temperature growth.</title>
        <authorList>
            <person name="Ayala-del-Rio H.L."/>
            <person name="Chain P.S."/>
            <person name="Grzymski J.J."/>
            <person name="Ponder M.A."/>
            <person name="Ivanova N."/>
            <person name="Bergholz P.W."/>
            <person name="Di Bartolo G."/>
            <person name="Hauser L."/>
            <person name="Land M."/>
            <person name="Bakermans C."/>
            <person name="Rodrigues D."/>
            <person name="Klappenbach J."/>
            <person name="Zarka D."/>
            <person name="Larimer F."/>
            <person name="Richardson P."/>
            <person name="Murray A."/>
            <person name="Thomashow M."/>
            <person name="Tiedje J.M."/>
        </authorList>
    </citation>
    <scope>NUCLEOTIDE SEQUENCE [LARGE SCALE GENOMIC DNA]</scope>
    <source>
        <strain>DSM 17307 / VKM B-2377 / 273-4</strain>
    </source>
</reference>
<protein>
    <recommendedName>
        <fullName evidence="1">N-acetyl-gamma-glutamyl-phosphate reductase</fullName>
        <shortName evidence="1">AGPR</shortName>
        <ecNumber evidence="1">1.2.1.38</ecNumber>
    </recommendedName>
    <alternativeName>
        <fullName evidence="1">N-acetyl-glutamate semialdehyde dehydrogenase</fullName>
        <shortName evidence="1">NAGSA dehydrogenase</shortName>
    </alternativeName>
</protein>
<accession>Q4FRK9</accession>
<comment type="function">
    <text evidence="1">Catalyzes the NADPH-dependent reduction of N-acetyl-5-glutamyl phosphate to yield N-acetyl-L-glutamate 5-semialdehyde.</text>
</comment>
<comment type="catalytic activity">
    <reaction evidence="1">
        <text>N-acetyl-L-glutamate 5-semialdehyde + phosphate + NADP(+) = N-acetyl-L-glutamyl 5-phosphate + NADPH + H(+)</text>
        <dbReference type="Rhea" id="RHEA:21588"/>
        <dbReference type="ChEBI" id="CHEBI:15378"/>
        <dbReference type="ChEBI" id="CHEBI:29123"/>
        <dbReference type="ChEBI" id="CHEBI:43474"/>
        <dbReference type="ChEBI" id="CHEBI:57783"/>
        <dbReference type="ChEBI" id="CHEBI:57936"/>
        <dbReference type="ChEBI" id="CHEBI:58349"/>
        <dbReference type="EC" id="1.2.1.38"/>
    </reaction>
</comment>
<comment type="pathway">
    <text evidence="1">Amino-acid biosynthesis; L-arginine biosynthesis; N(2)-acetyl-L-ornithine from L-glutamate: step 3/4.</text>
</comment>
<comment type="subcellular location">
    <subcellularLocation>
        <location evidence="1">Cytoplasm</location>
    </subcellularLocation>
</comment>
<comment type="similarity">
    <text evidence="1">Belongs to the NAGSA dehydrogenase family. Type 1 subfamily.</text>
</comment>
<gene>
    <name evidence="1" type="primary">argC</name>
    <name type="ordered locus">Psyc_1501</name>
</gene>
<name>ARGC_PSYA2</name>
<sequence length="355" mass="38774">MISAAIVGGTGYTGIELIRLLSAHPEVSIDLLTSRSEAGTRADEIFPSLRGISDIVFSDLGDETLATLQQCDVVFFATPHGVAMQQAEALTEAGVKVIDLAADFRLQSLTDFEHWYQQSHACPELLKTAVYGLPEINRDKIANALVVGNPGCYPTTAILGLKPIIEAQNKQSKQLIESRIVIDAKSGVSGAGRQASLALNYAESTDNFKAYSVEGHRHLPEIEQGVAQLLDSQFSHRVRFLPHLVPMIRGMLSSIHMELTDAGALMDWQQVFEQSYASEQFIDVMPKGLYPDTRSVRASNRLRIAVHQDNERAELTVIVVQDNLVKGAAGQAVQNMNVMFGFDESLGLNFAPIVP</sequence>
<organism>
    <name type="scientific">Psychrobacter arcticus (strain DSM 17307 / VKM B-2377 / 273-4)</name>
    <dbReference type="NCBI Taxonomy" id="259536"/>
    <lineage>
        <taxon>Bacteria</taxon>
        <taxon>Pseudomonadati</taxon>
        <taxon>Pseudomonadota</taxon>
        <taxon>Gammaproteobacteria</taxon>
        <taxon>Moraxellales</taxon>
        <taxon>Moraxellaceae</taxon>
        <taxon>Psychrobacter</taxon>
    </lineage>
</organism>
<dbReference type="EC" id="1.2.1.38" evidence="1"/>
<dbReference type="EMBL" id="CP000082">
    <property type="protein sequence ID" value="AAZ19349.1"/>
    <property type="molecule type" value="Genomic_DNA"/>
</dbReference>
<dbReference type="RefSeq" id="WP_011280766.1">
    <property type="nucleotide sequence ID" value="NC_007204.1"/>
</dbReference>
<dbReference type="SMR" id="Q4FRK9"/>
<dbReference type="STRING" id="259536.Psyc_1501"/>
<dbReference type="KEGG" id="par:Psyc_1501"/>
<dbReference type="eggNOG" id="COG0002">
    <property type="taxonomic scope" value="Bacteria"/>
</dbReference>
<dbReference type="HOGENOM" id="CLU_006384_0_1_6"/>
<dbReference type="OrthoDB" id="9801289at2"/>
<dbReference type="UniPathway" id="UPA00068">
    <property type="reaction ID" value="UER00108"/>
</dbReference>
<dbReference type="Proteomes" id="UP000000546">
    <property type="component" value="Chromosome"/>
</dbReference>
<dbReference type="GO" id="GO:0005737">
    <property type="term" value="C:cytoplasm"/>
    <property type="evidence" value="ECO:0007669"/>
    <property type="project" value="UniProtKB-SubCell"/>
</dbReference>
<dbReference type="GO" id="GO:0003942">
    <property type="term" value="F:N-acetyl-gamma-glutamyl-phosphate reductase activity"/>
    <property type="evidence" value="ECO:0007669"/>
    <property type="project" value="UniProtKB-UniRule"/>
</dbReference>
<dbReference type="GO" id="GO:0051287">
    <property type="term" value="F:NAD binding"/>
    <property type="evidence" value="ECO:0007669"/>
    <property type="project" value="InterPro"/>
</dbReference>
<dbReference type="GO" id="GO:0070401">
    <property type="term" value="F:NADP+ binding"/>
    <property type="evidence" value="ECO:0007669"/>
    <property type="project" value="InterPro"/>
</dbReference>
<dbReference type="GO" id="GO:0006526">
    <property type="term" value="P:L-arginine biosynthetic process"/>
    <property type="evidence" value="ECO:0007669"/>
    <property type="project" value="UniProtKB-UniRule"/>
</dbReference>
<dbReference type="CDD" id="cd23934">
    <property type="entry name" value="AGPR_1_C"/>
    <property type="match status" value="1"/>
</dbReference>
<dbReference type="CDD" id="cd17895">
    <property type="entry name" value="AGPR_1_N"/>
    <property type="match status" value="1"/>
</dbReference>
<dbReference type="Gene3D" id="3.30.360.10">
    <property type="entry name" value="Dihydrodipicolinate Reductase, domain 2"/>
    <property type="match status" value="1"/>
</dbReference>
<dbReference type="Gene3D" id="3.40.50.720">
    <property type="entry name" value="NAD(P)-binding Rossmann-like Domain"/>
    <property type="match status" value="1"/>
</dbReference>
<dbReference type="HAMAP" id="MF_00150">
    <property type="entry name" value="ArgC_type1"/>
    <property type="match status" value="1"/>
</dbReference>
<dbReference type="InterPro" id="IPR023013">
    <property type="entry name" value="AGPR_AS"/>
</dbReference>
<dbReference type="InterPro" id="IPR000706">
    <property type="entry name" value="AGPR_type-1"/>
</dbReference>
<dbReference type="InterPro" id="IPR036291">
    <property type="entry name" value="NAD(P)-bd_dom_sf"/>
</dbReference>
<dbReference type="InterPro" id="IPR050085">
    <property type="entry name" value="NAGSA_dehydrogenase"/>
</dbReference>
<dbReference type="InterPro" id="IPR000534">
    <property type="entry name" value="Semialdehyde_DH_NAD-bd"/>
</dbReference>
<dbReference type="NCBIfam" id="TIGR01850">
    <property type="entry name" value="argC"/>
    <property type="match status" value="1"/>
</dbReference>
<dbReference type="PANTHER" id="PTHR32338:SF10">
    <property type="entry name" value="N-ACETYL-GAMMA-GLUTAMYL-PHOSPHATE REDUCTASE, CHLOROPLASTIC-RELATED"/>
    <property type="match status" value="1"/>
</dbReference>
<dbReference type="PANTHER" id="PTHR32338">
    <property type="entry name" value="N-ACETYL-GAMMA-GLUTAMYL-PHOSPHATE REDUCTASE, CHLOROPLASTIC-RELATED-RELATED"/>
    <property type="match status" value="1"/>
</dbReference>
<dbReference type="Pfam" id="PF01118">
    <property type="entry name" value="Semialdhyde_dh"/>
    <property type="match status" value="1"/>
</dbReference>
<dbReference type="Pfam" id="PF22698">
    <property type="entry name" value="Semialdhyde_dhC_1"/>
    <property type="match status" value="1"/>
</dbReference>
<dbReference type="SMART" id="SM00859">
    <property type="entry name" value="Semialdhyde_dh"/>
    <property type="match status" value="1"/>
</dbReference>
<dbReference type="SUPFAM" id="SSF55347">
    <property type="entry name" value="Glyceraldehyde-3-phosphate dehydrogenase-like, C-terminal domain"/>
    <property type="match status" value="1"/>
</dbReference>
<dbReference type="SUPFAM" id="SSF51735">
    <property type="entry name" value="NAD(P)-binding Rossmann-fold domains"/>
    <property type="match status" value="1"/>
</dbReference>
<dbReference type="PROSITE" id="PS01224">
    <property type="entry name" value="ARGC"/>
    <property type="match status" value="1"/>
</dbReference>